<evidence type="ECO:0000250" key="1">
    <source>
        <dbReference type="UniProtKB" id="E9Q9R9"/>
    </source>
</evidence>
<evidence type="ECO:0000255" key="2"/>
<evidence type="ECO:0000255" key="3">
    <source>
        <dbReference type="PROSITE-ProRule" id="PRU00100"/>
    </source>
</evidence>
<evidence type="ECO:0000255" key="4">
    <source>
        <dbReference type="PROSITE-ProRule" id="PRU00143"/>
    </source>
</evidence>
<evidence type="ECO:0000255" key="5">
    <source>
        <dbReference type="PROSITE-ProRule" id="PRU00192"/>
    </source>
</evidence>
<evidence type="ECO:0000256" key="6">
    <source>
        <dbReference type="SAM" id="MobiDB-lite"/>
    </source>
</evidence>
<evidence type="ECO:0000269" key="7">
    <source>
    </source>
</evidence>
<evidence type="ECO:0000269" key="8">
    <source>
    </source>
</evidence>
<evidence type="ECO:0000269" key="9">
    <source>
    </source>
</evidence>
<evidence type="ECO:0000269" key="10">
    <source>
    </source>
</evidence>
<evidence type="ECO:0000269" key="11">
    <source>
    </source>
</evidence>
<evidence type="ECO:0000269" key="12">
    <source>
    </source>
</evidence>
<evidence type="ECO:0000269" key="13">
    <source>
    </source>
</evidence>
<evidence type="ECO:0000269" key="14">
    <source>
    </source>
</evidence>
<evidence type="ECO:0000269" key="15">
    <source>
    </source>
</evidence>
<evidence type="ECO:0000269" key="16">
    <source>
    </source>
</evidence>
<evidence type="ECO:0000303" key="17">
    <source>
    </source>
</evidence>
<evidence type="ECO:0000303" key="18">
    <source>
    </source>
</evidence>
<evidence type="ECO:0000303" key="19">
    <source>
    </source>
</evidence>
<evidence type="ECO:0000305" key="20"/>
<evidence type="ECO:0007744" key="21">
    <source>
    </source>
</evidence>
<evidence type="ECO:0007744" key="22">
    <source>
    </source>
</evidence>
<evidence type="ECO:0007744" key="23">
    <source>
    </source>
</evidence>
<evidence type="ECO:0007829" key="24">
    <source>
        <dbReference type="PDB" id="1UIT"/>
    </source>
</evidence>
<dbReference type="EMBL" id="U61843">
    <property type="protein sequence ID" value="AAC61295.1"/>
    <property type="molecule type" value="mRNA"/>
</dbReference>
<dbReference type="EMBL" id="AF352033">
    <property type="protein sequence ID" value="AAL83937.1"/>
    <property type="molecule type" value="Genomic_DNA"/>
</dbReference>
<dbReference type="EMBL" id="AF352034">
    <property type="protein sequence ID" value="AAL83938.1"/>
    <property type="molecule type" value="mRNA"/>
</dbReference>
<dbReference type="EMBL" id="AB011155">
    <property type="protein sequence ID" value="BAA25509.2"/>
    <property type="status" value="ALT_INIT"/>
    <property type="molecule type" value="mRNA"/>
</dbReference>
<dbReference type="EMBL" id="AL391421">
    <property type="status" value="NOT_ANNOTATED_CDS"/>
    <property type="molecule type" value="Genomic_DNA"/>
</dbReference>
<dbReference type="EMBL" id="AL450306">
    <property type="status" value="NOT_ANNOTATED_CDS"/>
    <property type="molecule type" value="Genomic_DNA"/>
</dbReference>
<dbReference type="EMBL" id="BC073996">
    <property type="protein sequence ID" value="AAH73996.1"/>
    <property type="molecule type" value="mRNA"/>
</dbReference>
<dbReference type="EMBL" id="BC117695">
    <property type="protein sequence ID" value="AAI17696.1"/>
    <property type="status" value="ALT_INIT"/>
    <property type="molecule type" value="mRNA"/>
</dbReference>
<dbReference type="EMBL" id="BC146794">
    <property type="protein sequence ID" value="AAI46795.1"/>
    <property type="molecule type" value="mRNA"/>
</dbReference>
<dbReference type="EMBL" id="AB091676">
    <property type="protein sequence ID" value="BAC65420.1"/>
    <property type="molecule type" value="mRNA"/>
</dbReference>
<dbReference type="CCDS" id="CCDS7353.2">
    <molecule id="Q8TDM6-1"/>
</dbReference>
<dbReference type="PIR" id="T00346">
    <property type="entry name" value="T00346"/>
</dbReference>
<dbReference type="RefSeq" id="NP_004738.3">
    <molecule id="Q8TDM6-1"/>
    <property type="nucleotide sequence ID" value="NM_004747.3"/>
</dbReference>
<dbReference type="RefSeq" id="XP_006718119.1">
    <molecule id="Q8TDM6-2"/>
    <property type="nucleotide sequence ID" value="XM_006718056.4"/>
</dbReference>
<dbReference type="RefSeq" id="XP_011538647.1">
    <property type="nucleotide sequence ID" value="XM_011540345.1"/>
</dbReference>
<dbReference type="RefSeq" id="XP_016872403.1">
    <molecule id="Q8TDM6-4"/>
    <property type="nucleotide sequence ID" value="XM_017016914.2"/>
</dbReference>
<dbReference type="RefSeq" id="XP_047281954.1">
    <molecule id="Q8TDM6-4"/>
    <property type="nucleotide sequence ID" value="XM_047425998.1"/>
</dbReference>
<dbReference type="PDB" id="1UIT">
    <property type="method" value="NMR"/>
    <property type="chains" value="A=1336-1439"/>
</dbReference>
<dbReference type="PDBsum" id="1UIT"/>
<dbReference type="SMR" id="Q8TDM6"/>
<dbReference type="BioGRID" id="114662">
    <property type="interactions" value="183"/>
</dbReference>
<dbReference type="ComplexPortal" id="CPX-6187">
    <property type="entry name" value="Scribble cell polarity complex, DLG5-LLGL2-SCRIB variant"/>
</dbReference>
<dbReference type="ComplexPortal" id="CPX-6188">
    <property type="entry name" value="Scribble cell polarity complex, DLG5-LLGL1-SCRIB variant"/>
</dbReference>
<dbReference type="CORUM" id="Q8TDM6"/>
<dbReference type="DIP" id="DIP-41450N"/>
<dbReference type="FunCoup" id="Q8TDM6">
    <property type="interactions" value="903"/>
</dbReference>
<dbReference type="IntAct" id="Q8TDM6">
    <property type="interactions" value="73"/>
</dbReference>
<dbReference type="MINT" id="Q8TDM6"/>
<dbReference type="STRING" id="9606.ENSP00000361467"/>
<dbReference type="GlyCosmos" id="Q8TDM6">
    <property type="glycosylation" value="3 sites, 1 glycan"/>
</dbReference>
<dbReference type="GlyGen" id="Q8TDM6">
    <property type="glycosylation" value="9 sites, 2 O-linked glycans (9 sites)"/>
</dbReference>
<dbReference type="iPTMnet" id="Q8TDM6"/>
<dbReference type="PhosphoSitePlus" id="Q8TDM6"/>
<dbReference type="BioMuta" id="DLG5"/>
<dbReference type="DMDM" id="158939323"/>
<dbReference type="jPOST" id="Q8TDM6"/>
<dbReference type="MassIVE" id="Q8TDM6"/>
<dbReference type="PaxDb" id="9606-ENSP00000361467"/>
<dbReference type="PeptideAtlas" id="Q8TDM6"/>
<dbReference type="ProteomicsDB" id="74302">
    <molecule id="Q8TDM6-1"/>
</dbReference>
<dbReference type="ProteomicsDB" id="74303">
    <molecule id="Q8TDM6-2"/>
</dbReference>
<dbReference type="ProteomicsDB" id="74304">
    <molecule id="Q8TDM6-3"/>
</dbReference>
<dbReference type="ProteomicsDB" id="74305">
    <molecule id="Q8TDM6-4"/>
</dbReference>
<dbReference type="ProteomicsDB" id="74306">
    <molecule id="Q8TDM6-5"/>
</dbReference>
<dbReference type="Pumba" id="Q8TDM6"/>
<dbReference type="Antibodypedia" id="618">
    <property type="antibodies" value="103 antibodies from 17 providers"/>
</dbReference>
<dbReference type="DNASU" id="9231"/>
<dbReference type="Ensembl" id="ENST00000372391.7">
    <molecule id="Q8TDM6-1"/>
    <property type="protein sequence ID" value="ENSP00000361467.2"/>
    <property type="gene ID" value="ENSG00000151208.17"/>
</dbReference>
<dbReference type="Ensembl" id="ENST00000614211.2">
    <molecule id="Q8TDM6-1"/>
    <property type="protein sequence ID" value="ENSP00000484894.1"/>
    <property type="gene ID" value="ENSG00000274429.2"/>
</dbReference>
<dbReference type="GeneID" id="9231"/>
<dbReference type="KEGG" id="hsa:9231"/>
<dbReference type="MANE-Select" id="ENST00000372391.7">
    <property type="protein sequence ID" value="ENSP00000361467.2"/>
    <property type="RefSeq nucleotide sequence ID" value="NM_004747.4"/>
    <property type="RefSeq protein sequence ID" value="NP_004738.3"/>
</dbReference>
<dbReference type="UCSC" id="uc001jzk.4">
    <molecule id="Q8TDM6-1"/>
    <property type="organism name" value="human"/>
</dbReference>
<dbReference type="AGR" id="HGNC:2904"/>
<dbReference type="CTD" id="9231"/>
<dbReference type="DisGeNET" id="9231"/>
<dbReference type="GeneCards" id="DLG5"/>
<dbReference type="HGNC" id="HGNC:2904">
    <property type="gene designation" value="DLG5"/>
</dbReference>
<dbReference type="HPA" id="ENSG00000151208">
    <property type="expression patterns" value="Low tissue specificity"/>
</dbReference>
<dbReference type="MalaCards" id="DLG5"/>
<dbReference type="MIM" id="604090">
    <property type="type" value="gene"/>
</dbReference>
<dbReference type="MIM" id="620703">
    <property type="type" value="phenotype"/>
</dbReference>
<dbReference type="neXtProt" id="NX_Q8TDM6"/>
<dbReference type="OpenTargets" id="ENSG00000151208"/>
<dbReference type="PharmGKB" id="PA27360"/>
<dbReference type="VEuPathDB" id="HostDB:ENSG00000151208"/>
<dbReference type="eggNOG" id="KOG0708">
    <property type="taxonomic scope" value="Eukaryota"/>
</dbReference>
<dbReference type="eggNOG" id="KOG3528">
    <property type="taxonomic scope" value="Eukaryota"/>
</dbReference>
<dbReference type="GeneTree" id="ENSGT00940000155303"/>
<dbReference type="HOGENOM" id="CLU_002448_1_0_1"/>
<dbReference type="InParanoid" id="Q8TDM6"/>
<dbReference type="OMA" id="QEHYMAD"/>
<dbReference type="OrthoDB" id="10067129at2759"/>
<dbReference type="PAN-GO" id="Q8TDM6">
    <property type="GO annotations" value="1 GO annotation based on evolutionary models"/>
</dbReference>
<dbReference type="PhylomeDB" id="Q8TDM6"/>
<dbReference type="TreeFam" id="TF323171"/>
<dbReference type="PathwayCommons" id="Q8TDM6"/>
<dbReference type="Reactome" id="R-HSA-9013420">
    <property type="pathway name" value="RHOU GTPase cycle"/>
</dbReference>
<dbReference type="Reactome" id="R-HSA-9013424">
    <property type="pathway name" value="RHOV GTPase cycle"/>
</dbReference>
<dbReference type="Reactome" id="R-HSA-9696264">
    <property type="pathway name" value="RND3 GTPase cycle"/>
</dbReference>
<dbReference type="Reactome" id="R-HSA-9696270">
    <property type="pathway name" value="RND2 GTPase cycle"/>
</dbReference>
<dbReference type="Reactome" id="R-HSA-9696273">
    <property type="pathway name" value="RND1 GTPase cycle"/>
</dbReference>
<dbReference type="SignaLink" id="Q8TDM6"/>
<dbReference type="SIGNOR" id="Q8TDM6"/>
<dbReference type="BioGRID-ORCS" id="9231">
    <property type="hits" value="108 hits in 1167 CRISPR screens"/>
</dbReference>
<dbReference type="ChiTaRS" id="DLG5">
    <property type="organism name" value="human"/>
</dbReference>
<dbReference type="EvolutionaryTrace" id="Q8TDM6"/>
<dbReference type="GeneWiki" id="DLG5"/>
<dbReference type="GenomeRNAi" id="9231"/>
<dbReference type="Pharos" id="Q8TDM6">
    <property type="development level" value="Tbio"/>
</dbReference>
<dbReference type="PRO" id="PR:Q8TDM6"/>
<dbReference type="Proteomes" id="UP000005640">
    <property type="component" value="Chromosome 10"/>
</dbReference>
<dbReference type="RNAct" id="Q8TDM6">
    <property type="molecule type" value="protein"/>
</dbReference>
<dbReference type="Bgee" id="ENSG00000151208">
    <property type="expression patterns" value="Expressed in ventricular zone and 99 other cell types or tissues"/>
</dbReference>
<dbReference type="ExpressionAtlas" id="Q8TDM6">
    <property type="expression patterns" value="baseline and differential"/>
</dbReference>
<dbReference type="GO" id="GO:0005912">
    <property type="term" value="C:adherens junction"/>
    <property type="evidence" value="ECO:0000303"/>
    <property type="project" value="ComplexPortal"/>
</dbReference>
<dbReference type="GO" id="GO:0030054">
    <property type="term" value="C:cell junction"/>
    <property type="evidence" value="ECO:0000314"/>
    <property type="project" value="HPA"/>
</dbReference>
<dbReference type="GO" id="GO:0036064">
    <property type="term" value="C:ciliary basal body"/>
    <property type="evidence" value="ECO:0000250"/>
    <property type="project" value="UniProtKB"/>
</dbReference>
<dbReference type="GO" id="GO:0005737">
    <property type="term" value="C:cytoplasm"/>
    <property type="evidence" value="ECO:0000304"/>
    <property type="project" value="ProtInc"/>
</dbReference>
<dbReference type="GO" id="GO:0098978">
    <property type="term" value="C:glutamatergic synapse"/>
    <property type="evidence" value="ECO:0007669"/>
    <property type="project" value="Ensembl"/>
</dbReference>
<dbReference type="GO" id="GO:0005886">
    <property type="term" value="C:plasma membrane"/>
    <property type="evidence" value="ECO:0000304"/>
    <property type="project" value="ProtInc"/>
</dbReference>
<dbReference type="GO" id="GO:0014069">
    <property type="term" value="C:postsynaptic density"/>
    <property type="evidence" value="ECO:0000250"/>
    <property type="project" value="UniProtKB"/>
</dbReference>
<dbReference type="GO" id="GO:0008013">
    <property type="term" value="F:beta-catenin binding"/>
    <property type="evidence" value="ECO:0000314"/>
    <property type="project" value="MGI"/>
</dbReference>
<dbReference type="GO" id="GO:0008092">
    <property type="term" value="F:cytoskeletal protein binding"/>
    <property type="evidence" value="ECO:0000314"/>
    <property type="project" value="MGI"/>
</dbReference>
<dbReference type="GO" id="GO:0030159">
    <property type="term" value="F:signaling receptor complex adaptor activity"/>
    <property type="evidence" value="ECO:0000303"/>
    <property type="project" value="UniProtKB"/>
</dbReference>
<dbReference type="GO" id="GO:0045176">
    <property type="term" value="P:apical protein localization"/>
    <property type="evidence" value="ECO:0007669"/>
    <property type="project" value="Ensembl"/>
</dbReference>
<dbReference type="GO" id="GO:0098609">
    <property type="term" value="P:cell-cell adhesion"/>
    <property type="evidence" value="ECO:0000303"/>
    <property type="project" value="UniProtKB"/>
</dbReference>
<dbReference type="GO" id="GO:0001837">
    <property type="term" value="P:epithelial to mesenchymal transition"/>
    <property type="evidence" value="ECO:0000315"/>
    <property type="project" value="UniProtKB"/>
</dbReference>
<dbReference type="GO" id="GO:0060441">
    <property type="term" value="P:epithelial tube branching involved in lung morphogenesis"/>
    <property type="evidence" value="ECO:0007669"/>
    <property type="project" value="Ensembl"/>
</dbReference>
<dbReference type="GO" id="GO:0045197">
    <property type="term" value="P:establishment or maintenance of epithelial cell apical/basal polarity"/>
    <property type="evidence" value="ECO:0000303"/>
    <property type="project" value="ComplexPortal"/>
</dbReference>
<dbReference type="GO" id="GO:0010001">
    <property type="term" value="P:glial cell differentiation"/>
    <property type="evidence" value="ECO:0007669"/>
    <property type="project" value="Ensembl"/>
</dbReference>
<dbReference type="GO" id="GO:0035556">
    <property type="term" value="P:intracellular signal transduction"/>
    <property type="evidence" value="ECO:0000303"/>
    <property type="project" value="UniProtKB"/>
</dbReference>
<dbReference type="GO" id="GO:0030011">
    <property type="term" value="P:maintenance of cell polarity"/>
    <property type="evidence" value="ECO:0000315"/>
    <property type="project" value="UniProtKB"/>
</dbReference>
<dbReference type="GO" id="GO:0072205">
    <property type="term" value="P:metanephric collecting duct development"/>
    <property type="evidence" value="ECO:0007669"/>
    <property type="project" value="Ensembl"/>
</dbReference>
<dbReference type="GO" id="GO:0030901">
    <property type="term" value="P:midbrain development"/>
    <property type="evidence" value="ECO:0007669"/>
    <property type="project" value="Ensembl"/>
</dbReference>
<dbReference type="GO" id="GO:0030336">
    <property type="term" value="P:negative regulation of cell migration"/>
    <property type="evidence" value="ECO:0000315"/>
    <property type="project" value="UniProtKB"/>
</dbReference>
<dbReference type="GO" id="GO:0008285">
    <property type="term" value="P:negative regulation of cell population proliferation"/>
    <property type="evidence" value="ECO:0000304"/>
    <property type="project" value="ProtInc"/>
</dbReference>
<dbReference type="GO" id="GO:0035331">
    <property type="term" value="P:negative regulation of hippo signaling"/>
    <property type="evidence" value="ECO:0000315"/>
    <property type="project" value="UniProtKB"/>
</dbReference>
<dbReference type="GO" id="GO:0042130">
    <property type="term" value="P:negative regulation of T cell proliferation"/>
    <property type="evidence" value="ECO:0000315"/>
    <property type="project" value="UniProtKB"/>
</dbReference>
<dbReference type="GO" id="GO:0060563">
    <property type="term" value="P:neuroepithelial cell differentiation"/>
    <property type="evidence" value="ECO:0007669"/>
    <property type="project" value="Ensembl"/>
</dbReference>
<dbReference type="GO" id="GO:0030859">
    <property type="term" value="P:polarized epithelial cell differentiation"/>
    <property type="evidence" value="ECO:0007669"/>
    <property type="project" value="Ensembl"/>
</dbReference>
<dbReference type="GO" id="GO:0060999">
    <property type="term" value="P:positive regulation of dendritic spine development"/>
    <property type="evidence" value="ECO:0000250"/>
    <property type="project" value="UniProtKB"/>
</dbReference>
<dbReference type="GO" id="GO:0035332">
    <property type="term" value="P:positive regulation of hippo signaling"/>
    <property type="evidence" value="ECO:0000315"/>
    <property type="project" value="UniProtKB"/>
</dbReference>
<dbReference type="GO" id="GO:0045880">
    <property type="term" value="P:positive regulation of smoothened signaling pathway"/>
    <property type="evidence" value="ECO:0000250"/>
    <property type="project" value="UniProtKB"/>
</dbReference>
<dbReference type="GO" id="GO:0051965">
    <property type="term" value="P:positive regulation of synapse assembly"/>
    <property type="evidence" value="ECO:0000250"/>
    <property type="project" value="UniProtKB"/>
</dbReference>
<dbReference type="GO" id="GO:0099173">
    <property type="term" value="P:postsynapse organization"/>
    <property type="evidence" value="ECO:0007669"/>
    <property type="project" value="Ensembl"/>
</dbReference>
<dbReference type="GO" id="GO:0071896">
    <property type="term" value="P:protein localization to adherens junction"/>
    <property type="evidence" value="ECO:0007669"/>
    <property type="project" value="Ensembl"/>
</dbReference>
<dbReference type="GO" id="GO:0065003">
    <property type="term" value="P:protein-containing complex assembly"/>
    <property type="evidence" value="ECO:0007669"/>
    <property type="project" value="Ensembl"/>
</dbReference>
<dbReference type="GO" id="GO:0042981">
    <property type="term" value="P:regulation of apoptotic process"/>
    <property type="evidence" value="ECO:0007669"/>
    <property type="project" value="InterPro"/>
</dbReference>
<dbReference type="GO" id="GO:0007165">
    <property type="term" value="P:signal transduction"/>
    <property type="evidence" value="ECO:0000304"/>
    <property type="project" value="ProtInc"/>
</dbReference>
<dbReference type="GO" id="GO:0045186">
    <property type="term" value="P:zonula adherens assembly"/>
    <property type="evidence" value="ECO:0007669"/>
    <property type="project" value="Ensembl"/>
</dbReference>
<dbReference type="CDD" id="cd06764">
    <property type="entry name" value="PDZ1_DLG5-like"/>
    <property type="match status" value="1"/>
</dbReference>
<dbReference type="CDD" id="cd06765">
    <property type="entry name" value="PDZ2_DLG5-like"/>
    <property type="match status" value="1"/>
</dbReference>
<dbReference type="CDD" id="cd06767">
    <property type="entry name" value="PDZ3_DLG5-like"/>
    <property type="match status" value="1"/>
</dbReference>
<dbReference type="CDD" id="cd06766">
    <property type="entry name" value="PDZ4_DLG5-like"/>
    <property type="match status" value="1"/>
</dbReference>
<dbReference type="CDD" id="cd11860">
    <property type="entry name" value="SH3_DLG5"/>
    <property type="match status" value="1"/>
</dbReference>
<dbReference type="FunFam" id="2.30.30.40:FF:000130">
    <property type="entry name" value="Discs large 5, isoform A"/>
    <property type="match status" value="1"/>
</dbReference>
<dbReference type="FunFam" id="2.30.42.10:FF:000214">
    <property type="entry name" value="Discs large MAGUK scaffold protein 5"/>
    <property type="match status" value="1"/>
</dbReference>
<dbReference type="FunFam" id="3.40.50.300:FF:000894">
    <property type="entry name" value="Discs large MAGUK scaffold protein 5"/>
    <property type="match status" value="1"/>
</dbReference>
<dbReference type="FunFam" id="2.30.42.10:FF:000132">
    <property type="entry name" value="disks large homolog 5 isoform X1"/>
    <property type="match status" value="1"/>
</dbReference>
<dbReference type="FunFam" id="2.30.42.10:FF:000152">
    <property type="entry name" value="disks large homolog 5 isoform X1"/>
    <property type="match status" value="1"/>
</dbReference>
<dbReference type="Gene3D" id="2.30.42.10">
    <property type="match status" value="4"/>
</dbReference>
<dbReference type="Gene3D" id="1.10.533.10">
    <property type="entry name" value="Death Domain, Fas"/>
    <property type="match status" value="1"/>
</dbReference>
<dbReference type="Gene3D" id="3.40.50.300">
    <property type="entry name" value="P-loop containing nucleotide triphosphate hydrolases"/>
    <property type="match status" value="1"/>
</dbReference>
<dbReference type="Gene3D" id="2.30.30.40">
    <property type="entry name" value="SH3 Domains"/>
    <property type="match status" value="1"/>
</dbReference>
<dbReference type="InterPro" id="IPR001315">
    <property type="entry name" value="CARD"/>
</dbReference>
<dbReference type="InterPro" id="IPR011029">
    <property type="entry name" value="DEATH-like_dom_sf"/>
</dbReference>
<dbReference type="InterPro" id="IPR006907">
    <property type="entry name" value="DLG5_N"/>
</dbReference>
<dbReference type="InterPro" id="IPR035537">
    <property type="entry name" value="DLG5_SH3"/>
</dbReference>
<dbReference type="InterPro" id="IPR008145">
    <property type="entry name" value="GK/Ca_channel_bsu"/>
</dbReference>
<dbReference type="InterPro" id="IPR008144">
    <property type="entry name" value="Guanylate_kin-like_dom"/>
</dbReference>
<dbReference type="InterPro" id="IPR053004">
    <property type="entry name" value="MAGUK_Signaling_Regulators"/>
</dbReference>
<dbReference type="InterPro" id="IPR027417">
    <property type="entry name" value="P-loop_NTPase"/>
</dbReference>
<dbReference type="InterPro" id="IPR001478">
    <property type="entry name" value="PDZ"/>
</dbReference>
<dbReference type="InterPro" id="IPR036034">
    <property type="entry name" value="PDZ_sf"/>
</dbReference>
<dbReference type="InterPro" id="IPR036028">
    <property type="entry name" value="SH3-like_dom_sf"/>
</dbReference>
<dbReference type="InterPro" id="IPR001452">
    <property type="entry name" value="SH3_domain"/>
</dbReference>
<dbReference type="PANTHER" id="PTHR46360">
    <property type="entry name" value="DISKS LARGE HOMOLOG 5"/>
    <property type="match status" value="1"/>
</dbReference>
<dbReference type="PANTHER" id="PTHR46360:SF1">
    <property type="entry name" value="DISKS LARGE HOMOLOG 5"/>
    <property type="match status" value="1"/>
</dbReference>
<dbReference type="Pfam" id="PF16610">
    <property type="entry name" value="dbPDZ_assoc"/>
    <property type="match status" value="1"/>
</dbReference>
<dbReference type="Pfam" id="PF00625">
    <property type="entry name" value="Guanylate_kin"/>
    <property type="match status" value="1"/>
</dbReference>
<dbReference type="Pfam" id="PF00595">
    <property type="entry name" value="PDZ"/>
    <property type="match status" value="3"/>
</dbReference>
<dbReference type="Pfam" id="PF04822">
    <property type="entry name" value="Takusan"/>
    <property type="match status" value="1"/>
</dbReference>
<dbReference type="SMART" id="SM00072">
    <property type="entry name" value="GuKc"/>
    <property type="match status" value="1"/>
</dbReference>
<dbReference type="SMART" id="SM00228">
    <property type="entry name" value="PDZ"/>
    <property type="match status" value="4"/>
</dbReference>
<dbReference type="SMART" id="SM00326">
    <property type="entry name" value="SH3"/>
    <property type="match status" value="1"/>
</dbReference>
<dbReference type="SUPFAM" id="SSF47986">
    <property type="entry name" value="DEATH domain"/>
    <property type="match status" value="1"/>
</dbReference>
<dbReference type="SUPFAM" id="SSF52540">
    <property type="entry name" value="P-loop containing nucleoside triphosphate hydrolases"/>
    <property type="match status" value="1"/>
</dbReference>
<dbReference type="SUPFAM" id="SSF50156">
    <property type="entry name" value="PDZ domain-like"/>
    <property type="match status" value="4"/>
</dbReference>
<dbReference type="SUPFAM" id="SSF50044">
    <property type="entry name" value="SH3-domain"/>
    <property type="match status" value="1"/>
</dbReference>
<dbReference type="PROSITE" id="PS50209">
    <property type="entry name" value="CARD"/>
    <property type="match status" value="1"/>
</dbReference>
<dbReference type="PROSITE" id="PS50052">
    <property type="entry name" value="GUANYLATE_KINASE_2"/>
    <property type="match status" value="1"/>
</dbReference>
<dbReference type="PROSITE" id="PS50106">
    <property type="entry name" value="PDZ"/>
    <property type="match status" value="4"/>
</dbReference>
<dbReference type="PROSITE" id="PS50002">
    <property type="entry name" value="SH3"/>
    <property type="match status" value="1"/>
</dbReference>
<keyword id="KW-0002">3D-structure</keyword>
<keyword id="KW-0025">Alternative splicing</keyword>
<keyword id="KW-0965">Cell junction</keyword>
<keyword id="KW-1003">Cell membrane</keyword>
<keyword id="KW-0966">Cell projection</keyword>
<keyword id="KW-0175">Coiled coil</keyword>
<keyword id="KW-0963">Cytoplasm</keyword>
<keyword id="KW-0206">Cytoskeleton</keyword>
<keyword id="KW-0225">Disease variant</keyword>
<keyword id="KW-0472">Membrane</keyword>
<keyword id="KW-0597">Phosphoprotein</keyword>
<keyword id="KW-1267">Proteomics identification</keyword>
<keyword id="KW-1185">Reference proteome</keyword>
<keyword id="KW-0677">Repeat</keyword>
<keyword id="KW-0728">SH3 domain</keyword>
<keyword id="KW-0770">Synapse</keyword>
<protein>
    <recommendedName>
        <fullName>Disks large homolog 5</fullName>
    </recommendedName>
    <alternativeName>
        <fullName>Discs large protein P-dlg</fullName>
    </alternativeName>
    <alternativeName>
        <fullName>Placenta and prostate DLG</fullName>
    </alternativeName>
</protein>
<organism>
    <name type="scientific">Homo sapiens</name>
    <name type="common">Human</name>
    <dbReference type="NCBI Taxonomy" id="9606"/>
    <lineage>
        <taxon>Eukaryota</taxon>
        <taxon>Metazoa</taxon>
        <taxon>Chordata</taxon>
        <taxon>Craniata</taxon>
        <taxon>Vertebrata</taxon>
        <taxon>Euteleostomi</taxon>
        <taxon>Mammalia</taxon>
        <taxon>Eutheria</taxon>
        <taxon>Euarchontoglires</taxon>
        <taxon>Primates</taxon>
        <taxon>Haplorrhini</taxon>
        <taxon>Catarrhini</taxon>
        <taxon>Hominidae</taxon>
        <taxon>Homo</taxon>
    </lineage>
</organism>
<feature type="chain" id="PRO_0000094564" description="Disks large homolog 5">
    <location>
        <begin position="1"/>
        <end position="1919"/>
    </location>
</feature>
<feature type="domain" description="PDZ 1" evidence="4">
    <location>
        <begin position="620"/>
        <end position="710"/>
    </location>
</feature>
<feature type="domain" description="PDZ 2" evidence="4">
    <location>
        <begin position="705"/>
        <end position="796"/>
    </location>
</feature>
<feature type="domain" description="PDZ 3" evidence="4">
    <location>
        <begin position="1350"/>
        <end position="1429"/>
    </location>
</feature>
<feature type="domain" description="PDZ 4" evidence="4">
    <location>
        <begin position="1501"/>
        <end position="1582"/>
    </location>
</feature>
<feature type="domain" description="SH3" evidence="5">
    <location>
        <begin position="1593"/>
        <end position="1661"/>
    </location>
</feature>
<feature type="domain" description="Guanylate kinase-like" evidence="3">
    <location>
        <begin position="1722"/>
        <end position="1905"/>
    </location>
</feature>
<feature type="region of interest" description="Disordered" evidence="6">
    <location>
        <begin position="98"/>
        <end position="142"/>
    </location>
</feature>
<feature type="region of interest" description="Disordered" evidence="6">
    <location>
        <begin position="927"/>
        <end position="1122"/>
    </location>
</feature>
<feature type="region of interest" description="Disordered" evidence="6">
    <location>
        <begin position="1150"/>
        <end position="1187"/>
    </location>
</feature>
<feature type="region of interest" description="Disordered" evidence="6">
    <location>
        <begin position="1201"/>
        <end position="1230"/>
    </location>
</feature>
<feature type="region of interest" description="Disordered" evidence="6">
    <location>
        <begin position="1245"/>
        <end position="1264"/>
    </location>
</feature>
<feature type="region of interest" description="Disordered" evidence="6">
    <location>
        <begin position="1271"/>
        <end position="1306"/>
    </location>
</feature>
<feature type="region of interest" description="Disordered" evidence="6">
    <location>
        <begin position="1434"/>
        <end position="1493"/>
    </location>
</feature>
<feature type="coiled-coil region" evidence="2">
    <location>
        <begin position="383"/>
        <end position="599"/>
    </location>
</feature>
<feature type="compositionally biased region" description="Low complexity" evidence="6">
    <location>
        <begin position="109"/>
        <end position="123"/>
    </location>
</feature>
<feature type="compositionally biased region" description="Basic and acidic residues" evidence="6">
    <location>
        <begin position="1017"/>
        <end position="1030"/>
    </location>
</feature>
<feature type="compositionally biased region" description="Pro residues" evidence="6">
    <location>
        <begin position="1045"/>
        <end position="1055"/>
    </location>
</feature>
<feature type="compositionally biased region" description="Low complexity" evidence="6">
    <location>
        <begin position="1252"/>
        <end position="1264"/>
    </location>
</feature>
<feature type="compositionally biased region" description="Low complexity" evidence="6">
    <location>
        <begin position="1284"/>
        <end position="1298"/>
    </location>
</feature>
<feature type="compositionally biased region" description="Polar residues" evidence="6">
    <location>
        <begin position="1449"/>
        <end position="1462"/>
    </location>
</feature>
<feature type="modified residue" description="Phosphoserine" evidence="23">
    <location>
        <position position="264"/>
    </location>
</feature>
<feature type="modified residue" description="Phosphoserine" evidence="21 22">
    <location>
        <position position="295"/>
    </location>
</feature>
<feature type="modified residue" description="Phosphoserine" evidence="23">
    <location>
        <position position="900"/>
    </location>
</feature>
<feature type="modified residue" description="Phosphothreonine" evidence="23">
    <location>
        <position position="984"/>
    </location>
</feature>
<feature type="modified residue" description="Phosphoserine" evidence="23">
    <location>
        <position position="1000"/>
    </location>
</feature>
<feature type="modified residue" description="Phosphothreonine" evidence="23">
    <location>
        <position position="1011"/>
    </location>
</feature>
<feature type="modified residue" description="Phosphoserine" evidence="23">
    <location>
        <position position="1021"/>
    </location>
</feature>
<feature type="modified residue" description="Phosphothreonine" evidence="23">
    <location>
        <position position="1183"/>
    </location>
</feature>
<feature type="modified residue" description="Phosphoserine" evidence="23">
    <location>
        <position position="1209"/>
    </location>
</feature>
<feature type="modified residue" description="Phosphoserine" evidence="23">
    <location>
        <position position="1263"/>
    </location>
</feature>
<feature type="modified residue" description="Phosphoserine" evidence="23">
    <location>
        <position position="1334"/>
    </location>
</feature>
<feature type="modified residue" description="Phosphoserine" evidence="23">
    <location>
        <position position="1666"/>
    </location>
</feature>
<feature type="splice variant" id="VSP_027198" description="In isoform 5." evidence="19">
    <location>
        <begin position="1"/>
        <end position="1245"/>
    </location>
</feature>
<feature type="splice variant" id="VSP_027197" description="In isoform 4." evidence="17">
    <location>
        <begin position="1"/>
        <end position="110"/>
    </location>
</feature>
<feature type="splice variant" id="VSP_027199" description="In isoform 3." evidence="18">
    <location>
        <begin position="130"/>
        <end position="580"/>
    </location>
</feature>
<feature type="splice variant" id="VSP_016349" description="In isoform 2." evidence="20">
    <location>
        <begin position="795"/>
        <end position="1134"/>
    </location>
</feature>
<feature type="splice variant" id="VSP_027200" description="In isoform 3." evidence="18">
    <original>E</original>
    <variation>V</variation>
    <location>
        <position position="1135"/>
    </location>
</feature>
<feature type="splice variant" id="VSP_027201" description="In isoform 3." evidence="18">
    <location>
        <begin position="1136"/>
        <end position="1919"/>
    </location>
</feature>
<feature type="sequence variant" id="VAR_027897" description="In dbSNP:rs1248696." evidence="7 9 10 15">
    <original>Q</original>
    <variation>R</variation>
    <location>
        <position position="140"/>
    </location>
</feature>
<feature type="sequence variant" id="VAR_089346" description="Found in a patient with steroid-resistant nephrotic syndrome; uncertain significance; dbSNP:rs777662625." evidence="14">
    <original>R</original>
    <variation>H</variation>
    <location>
        <position position="166"/>
    </location>
</feature>
<feature type="sequence variant" id="VAR_089347" description="Found in a patient with congenital heart disease and congenital anomalies of kidney and urinary tract; uncertain significance; dbSNP:rs774679674." evidence="14">
    <original>R</original>
    <variation>W</variation>
    <location>
        <position position="249"/>
    </location>
</feature>
<feature type="sequence variant" id="VAR_089348" description="In YUVOB; likely pathogenic; fails to fully rescue abnormal pronephros development and ventriculomegaly when expressed in dlg5-null Xenopus embryos; dbSNP:rs764575492." evidence="14">
    <location>
        <begin position="821"/>
        <end position="1919"/>
    </location>
</feature>
<feature type="sequence variant" id="VAR_089349" description="Found in a patient with steroid-resistant nephrotic syndrome; uncertain significance; dbSNP:rs138732431." evidence="14">
    <original>R</original>
    <variation>C</variation>
    <location>
        <position position="1072"/>
    </location>
</feature>
<feature type="sequence variant" id="VAR_027898" description="In dbSNP:rs2289310." evidence="9">
    <original>P</original>
    <variation>Q</variation>
    <location>
        <position position="1481"/>
    </location>
</feature>
<feature type="sequence variant" id="VAR_089350" description="Found in a patient with congenital anomalies of kidney and urinary tract; uncertain significance." evidence="14">
    <original>Q</original>
    <variation>L</variation>
    <location>
        <position position="1509"/>
    </location>
</feature>
<feature type="sequence variant" id="VAR_027899" description="In dbSNP:rs4979794.">
    <original>A</original>
    <variation>V</variation>
    <location>
        <position position="1600"/>
    </location>
</feature>
<feature type="strand" evidence="24">
    <location>
        <begin position="1349"/>
        <end position="1354"/>
    </location>
</feature>
<feature type="strand" evidence="24">
    <location>
        <begin position="1362"/>
        <end position="1366"/>
    </location>
</feature>
<feature type="strand" evidence="24">
    <location>
        <begin position="1372"/>
        <end position="1377"/>
    </location>
</feature>
<feature type="helix" evidence="24">
    <location>
        <begin position="1382"/>
        <end position="1386"/>
    </location>
</feature>
<feature type="turn" evidence="24">
    <location>
        <begin position="1402"/>
        <end position="1404"/>
    </location>
</feature>
<feature type="helix" evidence="24">
    <location>
        <begin position="1407"/>
        <end position="1413"/>
    </location>
</feature>
<feature type="strand" evidence="24">
    <location>
        <begin position="1419"/>
        <end position="1425"/>
    </location>
</feature>
<reference key="1">
    <citation type="journal article" date="1998" name="FEBS Lett.">
        <title>Identification of a novel human homolog of the Drosophila dlg, P-dlg, specifically expressed in the gland tissues and interacting with p55.</title>
        <authorList>
            <person name="Nakamura H."/>
            <person name="Sudo T."/>
            <person name="Tsuiki H."/>
            <person name="Miyake H."/>
            <person name="Morisaki T."/>
            <person name="Sasaki J."/>
            <person name="Masuko N."/>
            <person name="Kochi M."/>
            <person name="Ushio Y."/>
            <person name="Saya H."/>
        </authorList>
    </citation>
    <scope>NUCLEOTIDE SEQUENCE [MRNA] (ISOFORM 5)</scope>
    <scope>TISSUE SPECIFICITY</scope>
    <scope>INTERACTION WITH MPP1</scope>
    <source>
        <tissue>Fetal brain</tissue>
    </source>
</reference>
<reference key="2">
    <citation type="journal article" date="2002" name="BMC Genomics">
        <title>The cloning, genomic organization and tissue expression profile of the human DLG5 gene.</title>
        <authorList>
            <person name="Shah G."/>
            <person name="Brugada R."/>
            <person name="Gonzalez O."/>
            <person name="Czernuszewicz G."/>
            <person name="Gibbs R.A."/>
            <person name="Bachinski L."/>
            <person name="Roberts R."/>
        </authorList>
    </citation>
    <scope>NUCLEOTIDE SEQUENCE [GENOMIC DNA / MRNA] (ISOFORM 4)</scope>
    <scope>TISSUE SPECIFICITY</scope>
    <scope>VARIANT ARG-140</scope>
</reference>
<reference key="3">
    <citation type="journal article" date="1998" name="DNA Res.">
        <title>Prediction of the coding sequences of unidentified human genes. IX. The complete sequences of 100 new cDNA clones from brain which can code for large proteins in vitro.</title>
        <authorList>
            <person name="Nagase T."/>
            <person name="Ishikawa K."/>
            <person name="Miyajima N."/>
            <person name="Tanaka A."/>
            <person name="Kotani H."/>
            <person name="Nomura N."/>
            <person name="Ohara O."/>
        </authorList>
    </citation>
    <scope>NUCLEOTIDE SEQUENCE [LARGE SCALE MRNA] (ISOFORM 1)</scope>
    <scope>VARIANT ARG-140</scope>
    <source>
        <tissue>Brain</tissue>
    </source>
</reference>
<reference key="4">
    <citation type="submission" date="2005-08" db="EMBL/GenBank/DDBJ databases">
        <authorList>
            <person name="Ohara O."/>
            <person name="Nagase T."/>
            <person name="Kikuno R."/>
            <person name="Ishikawa K."/>
        </authorList>
    </citation>
    <scope>SEQUENCE REVISION</scope>
</reference>
<reference key="5">
    <citation type="journal article" date="2004" name="Nature">
        <title>The DNA sequence and comparative analysis of human chromosome 10.</title>
        <authorList>
            <person name="Deloukas P."/>
            <person name="Earthrowl M.E."/>
            <person name="Grafham D.V."/>
            <person name="Rubenfield M."/>
            <person name="French L."/>
            <person name="Steward C.A."/>
            <person name="Sims S.K."/>
            <person name="Jones M.C."/>
            <person name="Searle S."/>
            <person name="Scott C."/>
            <person name="Howe K."/>
            <person name="Hunt S.E."/>
            <person name="Andrews T.D."/>
            <person name="Gilbert J.G.R."/>
            <person name="Swarbreck D."/>
            <person name="Ashurst J.L."/>
            <person name="Taylor A."/>
            <person name="Battles J."/>
            <person name="Bird C.P."/>
            <person name="Ainscough R."/>
            <person name="Almeida J.P."/>
            <person name="Ashwell R.I.S."/>
            <person name="Ambrose K.D."/>
            <person name="Babbage A.K."/>
            <person name="Bagguley C.L."/>
            <person name="Bailey J."/>
            <person name="Banerjee R."/>
            <person name="Bates K."/>
            <person name="Beasley H."/>
            <person name="Bray-Allen S."/>
            <person name="Brown A.J."/>
            <person name="Brown J.Y."/>
            <person name="Burford D.C."/>
            <person name="Burrill W."/>
            <person name="Burton J."/>
            <person name="Cahill P."/>
            <person name="Camire D."/>
            <person name="Carter N.P."/>
            <person name="Chapman J.C."/>
            <person name="Clark S.Y."/>
            <person name="Clarke G."/>
            <person name="Clee C.M."/>
            <person name="Clegg S."/>
            <person name="Corby N."/>
            <person name="Coulson A."/>
            <person name="Dhami P."/>
            <person name="Dutta I."/>
            <person name="Dunn M."/>
            <person name="Faulkner L."/>
            <person name="Frankish A."/>
            <person name="Frankland J.A."/>
            <person name="Garner P."/>
            <person name="Garnett J."/>
            <person name="Gribble S."/>
            <person name="Griffiths C."/>
            <person name="Grocock R."/>
            <person name="Gustafson E."/>
            <person name="Hammond S."/>
            <person name="Harley J.L."/>
            <person name="Hart E."/>
            <person name="Heath P.D."/>
            <person name="Ho T.P."/>
            <person name="Hopkins B."/>
            <person name="Horne J."/>
            <person name="Howden P.J."/>
            <person name="Huckle E."/>
            <person name="Hynds C."/>
            <person name="Johnson C."/>
            <person name="Johnson D."/>
            <person name="Kana A."/>
            <person name="Kay M."/>
            <person name="Kimberley A.M."/>
            <person name="Kershaw J.K."/>
            <person name="Kokkinaki M."/>
            <person name="Laird G.K."/>
            <person name="Lawlor S."/>
            <person name="Lee H.M."/>
            <person name="Leongamornlert D.A."/>
            <person name="Laird G."/>
            <person name="Lloyd C."/>
            <person name="Lloyd D.M."/>
            <person name="Loveland J."/>
            <person name="Lovell J."/>
            <person name="McLaren S."/>
            <person name="McLay K.E."/>
            <person name="McMurray A."/>
            <person name="Mashreghi-Mohammadi M."/>
            <person name="Matthews L."/>
            <person name="Milne S."/>
            <person name="Nickerson T."/>
            <person name="Nguyen M."/>
            <person name="Overton-Larty E."/>
            <person name="Palmer S.A."/>
            <person name="Pearce A.V."/>
            <person name="Peck A.I."/>
            <person name="Pelan S."/>
            <person name="Phillimore B."/>
            <person name="Porter K."/>
            <person name="Rice C.M."/>
            <person name="Rogosin A."/>
            <person name="Ross M.T."/>
            <person name="Sarafidou T."/>
            <person name="Sehra H.K."/>
            <person name="Shownkeen R."/>
            <person name="Skuce C.D."/>
            <person name="Smith M."/>
            <person name="Standring L."/>
            <person name="Sycamore N."/>
            <person name="Tester J."/>
            <person name="Thorpe A."/>
            <person name="Torcasso W."/>
            <person name="Tracey A."/>
            <person name="Tromans A."/>
            <person name="Tsolas J."/>
            <person name="Wall M."/>
            <person name="Walsh J."/>
            <person name="Wang H."/>
            <person name="Weinstock K."/>
            <person name="West A.P."/>
            <person name="Willey D.L."/>
            <person name="Whitehead S.L."/>
            <person name="Wilming L."/>
            <person name="Wray P.W."/>
            <person name="Young L."/>
            <person name="Chen Y."/>
            <person name="Lovering R.C."/>
            <person name="Moschonas N.K."/>
            <person name="Siebert R."/>
            <person name="Fechtel K."/>
            <person name="Bentley D."/>
            <person name="Durbin R.M."/>
            <person name="Hubbard T."/>
            <person name="Doucette-Stamm L."/>
            <person name="Beck S."/>
            <person name="Smith D.R."/>
            <person name="Rogers J."/>
        </authorList>
    </citation>
    <scope>NUCLEOTIDE SEQUENCE [LARGE SCALE GENOMIC DNA]</scope>
</reference>
<reference key="6">
    <citation type="journal article" date="2004" name="Genome Res.">
        <title>The status, quality, and expansion of the NIH full-length cDNA project: the Mammalian Gene Collection (MGC).</title>
        <authorList>
            <consortium name="The MGC Project Team"/>
        </authorList>
    </citation>
    <scope>NUCLEOTIDE SEQUENCE [LARGE SCALE MRNA] (ISOFORM 1)</scope>
    <scope>NUCLEOTIDE SEQUENCE [LARGE SCALE MRNA] OF 1075-1919 (ISOFORM 3)</scope>
    <scope>VARIANTS ARG-140 AND GLN-1481</scope>
    <source>
        <tissue>PNS</tissue>
    </source>
</reference>
<reference key="7">
    <citation type="journal article" date="2003" name="J. Biol. Chem.">
        <title>Interaction of lp-dlg/KIAA0583, a membrane-associated guanylate kinase family protein, with vinexin and beta-catenin at sites of cell-cell contact.</title>
        <authorList>
            <person name="Wakabayashi M."/>
            <person name="Ito T."/>
            <person name="Mitsushima M."/>
            <person name="Aizawa S."/>
            <person name="Ueda K."/>
            <person name="Amachi T."/>
            <person name="Kioka N."/>
        </authorList>
    </citation>
    <scope>NUCLEOTIDE SEQUENCE [MRNA] OF 156-1919 (ISOFORM 1)</scope>
    <scope>SUBCELLULAR LOCATION</scope>
    <scope>TISSUE SPECIFICITY</scope>
    <scope>INTERACTION WITH SORBS3 AND CTNNB1</scope>
</reference>
<reference key="8">
    <citation type="journal article" date="2008" name="Proc. Natl. Acad. Sci. U.S.A.">
        <title>A quantitative atlas of mitotic phosphorylation.</title>
        <authorList>
            <person name="Dephoure N."/>
            <person name="Zhou C."/>
            <person name="Villen J."/>
            <person name="Beausoleil S.A."/>
            <person name="Bakalarski C.E."/>
            <person name="Elledge S.J."/>
            <person name="Gygi S.P."/>
        </authorList>
    </citation>
    <scope>IDENTIFICATION BY MASS SPECTROMETRY [LARGE SCALE ANALYSIS]</scope>
    <source>
        <tissue>Cervix carcinoma</tissue>
    </source>
</reference>
<reference key="9">
    <citation type="journal article" date="2010" name="Sci. Signal.">
        <title>Quantitative phosphoproteomics reveals widespread full phosphorylation site occupancy during mitosis.</title>
        <authorList>
            <person name="Olsen J.V."/>
            <person name="Vermeulen M."/>
            <person name="Santamaria A."/>
            <person name="Kumar C."/>
            <person name="Miller M.L."/>
            <person name="Jensen L.J."/>
            <person name="Gnad F."/>
            <person name="Cox J."/>
            <person name="Jensen T.S."/>
            <person name="Nigg E.A."/>
            <person name="Brunak S."/>
            <person name="Mann M."/>
        </authorList>
    </citation>
    <scope>PHOSPHORYLATION [LARGE SCALE ANALYSIS] AT SER-295</scope>
    <scope>IDENTIFICATION BY MASS SPECTROMETRY [LARGE SCALE ANALYSIS]</scope>
    <source>
        <tissue>Cervix carcinoma</tissue>
    </source>
</reference>
<reference key="10">
    <citation type="journal article" date="2011" name="Sci. Signal.">
        <title>System-wide temporal characterization of the proteome and phosphoproteome of human embryonic stem cell differentiation.</title>
        <authorList>
            <person name="Rigbolt K.T."/>
            <person name="Prokhorova T.A."/>
            <person name="Akimov V."/>
            <person name="Henningsen J."/>
            <person name="Johansen P.T."/>
            <person name="Kratchmarova I."/>
            <person name="Kassem M."/>
            <person name="Mann M."/>
            <person name="Olsen J.V."/>
            <person name="Blagoev B."/>
        </authorList>
    </citation>
    <scope>PHOSPHORYLATION [LARGE SCALE ANALYSIS] AT SER-295</scope>
    <scope>IDENTIFICATION BY MASS SPECTROMETRY [LARGE SCALE ANALYSIS]</scope>
</reference>
<reference key="11">
    <citation type="journal article" date="2013" name="J. Proteome Res.">
        <title>Toward a comprehensive characterization of a human cancer cell phosphoproteome.</title>
        <authorList>
            <person name="Zhou H."/>
            <person name="Di Palma S."/>
            <person name="Preisinger C."/>
            <person name="Peng M."/>
            <person name="Polat A.N."/>
            <person name="Heck A.J."/>
            <person name="Mohammed S."/>
        </authorList>
    </citation>
    <scope>PHOSPHORYLATION [LARGE SCALE ANALYSIS] AT SER-264; SER-900; THR-984; SER-1000; THR-1011; SER-1021; THR-1183; SER-1209; SER-1263; SER-1334 AND SER-1666</scope>
    <scope>IDENTIFICATION BY MASS SPECTROMETRY [LARGE SCALE ANALYSIS]</scope>
    <source>
        <tissue>Cervix carcinoma</tissue>
        <tissue>Erythroleukemia</tissue>
    </source>
</reference>
<reference key="12">
    <citation type="journal article" date="2016" name="Genes Dev.">
        <title>DLG5 connects cell polarity and Hippo signaling protein networks by linking PAR-1 with MST1/2.</title>
        <authorList>
            <person name="Kwan J."/>
            <person name="Sczaniecka A."/>
            <person name="Arash E.H."/>
            <person name="Nguyen L."/>
            <person name="Chen C.C."/>
            <person name="Ratkovic S."/>
            <person name="Klezovitch O."/>
            <person name="Attisano L."/>
            <person name="McNeill H."/>
            <person name="Emili A."/>
            <person name="Vasioukhin V."/>
        </authorList>
    </citation>
    <scope>FUNCTION</scope>
    <scope>INTERACTION WITH STK3; STK4 AND MARK3</scope>
</reference>
<reference key="13">
    <citation type="journal article" date="2017" name="Sci. Rep.">
        <title>Loss of DLG5 promotes breast cancer malignancy by inhibiting the Hippo signaling pathway.</title>
        <authorList>
            <person name="Liu J."/>
            <person name="Li J."/>
            <person name="Li P."/>
            <person name="Wang Y."/>
            <person name="Liang Z."/>
            <person name="Jiang Y."/>
            <person name="Li J."/>
            <person name="Feng C."/>
            <person name="Wang R."/>
            <person name="Chen H."/>
            <person name="Zhou C."/>
            <person name="Zhang J."/>
            <person name="Yang J."/>
            <person name="Liu P."/>
        </authorList>
    </citation>
    <scope>FUNCTION</scope>
    <scope>SUBCELLULAR LOCATION</scope>
    <scope>INTERACTION WITH SCRIB</scope>
    <scope>TISSUE SPECIFICITY</scope>
</reference>
<reference key="14">
    <citation type="journal article" date="2019" name="Clin. Genet.">
        <title>A homozygous frameshift variant in an alternatively spliced exon of DLG5 causes hydrocephalus and renal dysplasia.</title>
        <authorList>
            <person name="Yueksel Z."/>
            <person name="Vogel F."/>
            <person name="Alhashem A.M."/>
            <person name="Alanzi T.S.A."/>
            <person name="Tabarki B."/>
            <person name="Kampe K."/>
            <person name="Kandaswamy K.K."/>
            <person name="Werber M."/>
            <person name="Bertoli-Avella A.M."/>
            <person name="Beetz C."/>
            <person name="Rolfs A."/>
            <person name="Bauer P."/>
        </authorList>
    </citation>
    <scope>INVOLVEMENT IN YUVOB</scope>
</reference>
<reference key="15">
    <citation type="submission" date="2004-01" db="PDB data bank">
        <title>Solution structure of RSGI RUH-006, the third PDZ domain of HDLG5 (KIAA0583) protein [Homo sapiens].</title>
        <authorList>
            <consortium name="RIKEN structural genomics initiative (RSGI)"/>
        </authorList>
    </citation>
    <scope>STRUCTURE BY NMR OF 1224-1330</scope>
</reference>
<reference key="16">
    <citation type="journal article" date="2008" name="Nature">
        <title>DNA sequencing of a cytogenetically normal acute myeloid leukaemia genome.</title>
        <authorList>
            <person name="Ley T.J."/>
            <person name="Mardis E.R."/>
            <person name="Ding L."/>
            <person name="Fulton B."/>
            <person name="McLellan M.D."/>
            <person name="Chen K."/>
            <person name="Dooling D."/>
            <person name="Dunford-Shore B.H."/>
            <person name="McGrath S."/>
            <person name="Hickenbotham M."/>
            <person name="Cook L."/>
            <person name="Abbott R."/>
            <person name="Larson D.E."/>
            <person name="Koboldt D.C."/>
            <person name="Pohl C."/>
            <person name="Smith S."/>
            <person name="Hawkins A."/>
            <person name="Abbott S."/>
            <person name="Locke D."/>
            <person name="Hillier L.W."/>
            <person name="Miner T."/>
            <person name="Fulton L."/>
            <person name="Magrini V."/>
            <person name="Wylie T."/>
            <person name="Glasscock J."/>
            <person name="Conyers J."/>
            <person name="Sander N."/>
            <person name="Shi X."/>
            <person name="Osborne J.R."/>
            <person name="Minx P."/>
            <person name="Gordon D."/>
            <person name="Chinwalla A."/>
            <person name="Zhao Y."/>
            <person name="Ries R.E."/>
            <person name="Payton J.E."/>
            <person name="Westervelt P."/>
            <person name="Tomasson M.H."/>
            <person name="Watson M."/>
            <person name="Baty J."/>
            <person name="Ivanovich J."/>
            <person name="Heath S."/>
            <person name="Shannon W.D."/>
            <person name="Nagarajan R."/>
            <person name="Walter M.J."/>
            <person name="Link D.C."/>
            <person name="Graubert T.A."/>
            <person name="DiPersio J.F."/>
            <person name="Wilson R.K."/>
        </authorList>
    </citation>
    <scope>VARIANT [LARGE SCALE ANALYSIS] ARG-140</scope>
</reference>
<reference key="17">
    <citation type="journal article" date="2021" name="J. Med. Genet.">
        <title>DLG5 variants are associated with multiple congenital anomalies including ciliopathy phenotypes.</title>
        <authorList>
            <person name="Marquez J."/>
            <person name="Mann N."/>
            <person name="Arana K."/>
            <person name="Deniz E."/>
            <person name="Ji W."/>
            <person name="Konstantino M."/>
            <person name="Mis E.K."/>
            <person name="Deshpande C."/>
            <person name="Jeffries L."/>
            <person name="McGlynn J."/>
            <person name="Hugo H."/>
            <person name="Widmeier E."/>
            <person name="Konrad M."/>
            <person name="Tasic V."/>
            <person name="Morotti R."/>
            <person name="Baptista J."/>
            <person name="Ellard S."/>
            <person name="Lakhani S.A."/>
            <person name="Hildebrandt F."/>
            <person name="Khokha M.K."/>
        </authorList>
    </citation>
    <scope>VARIANT YUVOB 821-ARG--LEU-1919 DEL</scope>
    <scope>CHARACTERIZATION OF VARIANT YUVOB 821-ARG--LEU-1919 DEL</scope>
    <scope>INVOLVEMENT IN YUVOB</scope>
    <scope>VARIANTS HIS-166; TRP-249; CYS-1072 AND LEU-1509</scope>
</reference>
<comment type="function">
    <text evidence="1 11 12">Acts as a regulator of the Hippo signaling pathway (PubMed:28087714, PubMed:28169360). Negatively regulates the Hippo signaling pathway by mediating the interaction of MARK3 with STK3/4, bringing them together to promote MARK3-dependent hyperphosphorylation and inactivation of STK3 kinase activity toward LATS1 (PubMed:28087714). Positively regulates the Hippo signaling pathway by mediating the interaction of SCRIB with STK4/MST1 and LATS1 which is important for the activation of the Hippo signaling pathway. Involved in regulating cell proliferation, maintenance of epithelial polarity, epithelial-mesenchymal transition (EMT), cell migration and invasion (PubMed:28169360). Plays an important role in dendritic spine formation and synaptogenesis in cortical neurons; regulates synaptogenesis by enhancing the cell surface localization of N-cadherin. Acts as a positive regulator of hedgehog (Hh) signaling pathway. Plays a critical role in the early point of the SMO activity cycle by interacting with SMO at the ciliary base to induce the accumulation of KIF7 and GLI2 at the ciliary tip for GLI2 activation (By similarity).</text>
</comment>
<comment type="subunit">
    <text evidence="1 8 11 12 16">Interacts with MPP1 (PubMed:9738934). Interacts with CTNNB1 and with the third SH3 domain of SORBS3 to form a ternary complex (PubMed:12657639). Interacts (via coiled-coil domain) with MARK3. Interacts (via PDZ domain 3) with STK3/MST2 and STK4/MST1 (PubMed:28087714). Interacts with SCRIB (PubMed:28169360). Interacts with CTNB1, SMO and (via PDZ4 or guanylate kinase-like domain) with KIF7 (By similarity).</text>
</comment>
<comment type="interaction">
    <interactant intactId="EBI-715138">
        <id>Q8TDM6</id>
    </interactant>
    <interactant intactId="EBI-2899393">
        <id>Q64729</id>
        <label>Tgfbr1</label>
    </interactant>
    <organismsDiffer>true</organismsDiffer>
    <experiments>3</experiments>
</comment>
<comment type="interaction">
    <interactant intactId="EBI-715138">
        <id>Q8TDM6</id>
    </interactant>
    <interactant intactId="EBI-2899332">
        <id>Q62312</id>
        <label>Tgfbr2</label>
    </interactant>
    <organismsDiffer>true</organismsDiffer>
    <experiments>3</experiments>
</comment>
<comment type="subcellular location">
    <subcellularLocation>
        <location evidence="8 12">Cell junction</location>
    </subcellularLocation>
    <subcellularLocation>
        <location evidence="8">Cell membrane</location>
        <topology evidence="8">Peripheral membrane protein</topology>
    </subcellularLocation>
    <subcellularLocation>
        <location evidence="1">Postsynaptic density</location>
    </subcellularLocation>
    <subcellularLocation>
        <location evidence="1">Cytoplasm</location>
        <location evidence="1">Cytoskeleton</location>
        <location evidence="1">Cilium basal body</location>
    </subcellularLocation>
    <text>Localized at sites of cell-cell contact.</text>
</comment>
<comment type="alternative products">
    <event type="alternative splicing"/>
    <isoform>
        <id>Q8TDM6-1</id>
        <name>1</name>
        <sequence type="displayed"/>
    </isoform>
    <isoform>
        <id>Q8TDM6-2</id>
        <name>2</name>
        <sequence type="described" ref="VSP_016349"/>
    </isoform>
    <isoform>
        <id>Q8TDM6-3</id>
        <name>3</name>
        <sequence type="described" ref="VSP_027199 VSP_027200 VSP_027201"/>
    </isoform>
    <isoform>
        <id>Q8TDM6-4</id>
        <name>4</name>
        <sequence type="described" ref="VSP_027197"/>
    </isoform>
    <isoform>
        <id>Q8TDM6-5</id>
        <name>5</name>
        <sequence type="described" ref="VSP_027198"/>
    </isoform>
</comment>
<comment type="tissue specificity">
    <text evidence="7 8 12 16">Highly expressed in normal breast tissues and low-grade breast cancer tissues (at protein level) (PubMed:28169360). Highly expressed in the placenta and prostate. Expressed at a lower level in the thyroid, spinal cord, trachea, adrenal gland, skeletal muscle, pancreas, heart, brain, liver and kidney. A short splice product shows more limited expression, being absent from at least the brain.</text>
</comment>
<comment type="domain">
    <text evidence="1">The guanylate kinase-like domain interacts with the SH3 domain.</text>
</comment>
<comment type="disease" evidence="13 14">
    <disease id="DI-06841">
        <name>Yuksel-Vogel-Bauer syndrome</name>
        <acronym>YUVOB</acronym>
        <description>An autosomal recessive disorder characterized by multisystemic manifestations including cystic kidneys, nephrotic syndrome, hydrocephalus, limb abnormalities, congenital heart disease and craniofacial malformations.</description>
        <dbReference type="MIM" id="620703"/>
    </disease>
    <text>The disease is caused by variants affecting the gene represented in this entry.</text>
</comment>
<comment type="similarity">
    <text evidence="20">Belongs to the MAGUK family.</text>
</comment>
<comment type="sequence caution" evidence="20">
    <conflict type="erroneous initiation">
        <sequence resource="EMBL-CDS" id="AAI17696"/>
    </conflict>
</comment>
<comment type="sequence caution" evidence="20">
    <conflict type="erroneous initiation">
        <sequence resource="EMBL-CDS" id="BAA25509"/>
    </conflict>
</comment>
<accession>Q8TDM6</accession>
<accession>A6H8Y3</accession>
<accession>Q149N1</accession>
<accession>Q5T1H7</accession>
<accession>Q5T1H8</accession>
<accession>Q6DKG3</accession>
<accession>Q86WC0</accession>
<accession>Q8TDM7</accession>
<accession>Q9UE73</accession>
<accession>Q9Y4E3</accession>
<sequence>MEPQRRELLAQCQQSLAQAMTEVEAVLGLLEAAGALSPGERRQLDEEAGGAKAELLLKLLLAKERDHFQDLRAALEKTQPHLLPILYLNGVVGPPQPAEGAGSTYSVLSTMPSDSESSSSLSSVGTTGKAPSPPPLLTDQQVNEKVENLSIQLRLMTRERNELRKRLAFATHGTAFDKRPYHRLNPDYERLKIQCVRAMSDLQSLQNQHTNALKRCEEVAKETDFYHTLHSRLLSDQTRLKDDVDMLRRENGQLLRERNLLQQSWEDMKRLHEEDQKEIGDLRAQQQQVLKHNGSSEILNKLYDTAMDKLEVVKKDYDALRKRYSEKVAIHNADLSRLEQLGEENQRLLKQTEMLTQQRDTAIQLQHQCALSLRRFEAIHHELNKATAQNKDLQWEMELLQSELTELRTTQVKTAKESEKYREERDAVYSEYKLIMSERDQVISELDKLQTEVELAESKLKSSTSEKKAANEEMEALRQIKDTVTMDAGRANKEVEILRKQCKALCQELKEALQEADVAKCRRDWAFQERDKIVAERDSIRTLCDNLRRERDRAVSELAEALRSLDDTRKQKNDVSRELKELKEQMESQLEKEARFRQLMAHSSHDSAIDTDSMEWETEVVEFERETEDIDLKALGFDMAEGVNEPCFPGDCGIFVTKVDKGSIADGRLRVNDWLLRINDVDLINKDKKQAIKALLNGEGAINMVVRRRKSLGGKVVTPLHINLSGQKDSGISLENGVYAAAVLPGSPAAKEGSLAVGDRIVAINGIALDNKSLNECESLLRSCQDSLTLSLLKVFPQSSSWSGQNIFENIKDSDKMLSFRAHGPEVQAHNKRNLIQHNNSTQTDIFYTDRLEDRKEPGPPGGSSSFLHKPFPGGPLQVCPQACPSASERSLSSFRSDASGDRGFGLVDVRGRRPLLPFETEVGPCGVGEASLDKADSEGSNSGGTWPKAMLSSTAVPEKLSVYKKPKQRKSIFDPNTFKRPQTPPKIDYLLPGPGPAHSPQPSKRAGPLTPPKPPRRSDSIKFQHRLETSSESEATLVGSSPSTSPPSALPPDVDPGEPMHASPPRKARVRIASSYYPEGDGDSSHLPAKKSCDEDLTSQKVDELGQKRRRPKSAPSFRPKLAPVVIPAQFLEEQKCVPASGELSPELQEWAPYSPGHSSRHSNPPLYPSRPSVGTVPRSLTPSTTVSSILRNPIYTVRSHRVGPCSSPPAARDAGPQGLHPSVQHQGRLSLDLSHRTCSDYSEMRATHGSNSLPSSARLGSSSNLQFKAERIKIPSTPRYPRSVVGSERGSVSHSECSTPPQSPLNIDTLSSCSQSQTSASTLPRIAVNPASLGERRKDRPYVEEPRHVKVQKGSEPLGISIVSGEKGGIYVSKVTVGSIAHQAGLEYGDQLLEFNGINLRSATEQQARLIIGQQCDTITILAQYNPHVHQLSSHSRSSSHLDPAGTHSTLQGSGTTTPEHPSVIDPLMEQDEGPSTPPAKQSSSRIAGDANKKTLEPRVVFIKKSQLELGVHLCGGNLHGVFVAEVEDDSPAKGPDGLVPGDLILEYGSLDVRNKTVEEVYVEMLKPRDGVRLKVQYRPEEFTKAKGLPGDSFYIRALYDRLADVEQELSFKKDDILYVDDTLPQGTFGSWMAWQLDENAQKIQRGQIPSKYVMDQEFSRRLSMSEVKDDNSATKTLSAAARRSFFRRKHKHKRSGSKDGKDLLALDAFSSDSIPLFEDSVSLAYQRVQKVDCTALRPVLILGPLLDVVKEMLVNEAPGKFCRCPLEVMKASQQAIERGVKDCLFVDYKRRSGHFDVTTVASIKEITEKNRHCLLDIAPHAIERLHHMHIYPIVIFIHYKSAKHIKEQRDPIYLRDKVTQRHSKEQFEAAQKLEQEYSRYFTGVIQGGALSSICTQILAMVNQEQNKVLWIPACPL</sequence>
<proteinExistence type="evidence at protein level"/>
<name>DLG5_HUMAN</name>
<gene>
    <name type="primary">DLG5</name>
    <name type="synonym">KIAA0583</name>
    <name type="synonym">PDLG</name>
</gene>